<protein>
    <recommendedName>
        <fullName evidence="2">Elongation factor Tu</fullName>
        <shortName evidence="2">EF-Tu</shortName>
        <ecNumber evidence="2">3.6.5.3</ecNumber>
    </recommendedName>
</protein>
<proteinExistence type="inferred from homology"/>
<reference key="1">
    <citation type="journal article" date="2006" name="PLoS Genet.">
        <title>Secrets of soil survival revealed by the genome sequence of Arthrobacter aurescens TC1.</title>
        <authorList>
            <person name="Mongodin E.F."/>
            <person name="Shapir N."/>
            <person name="Daugherty S.C."/>
            <person name="DeBoy R.T."/>
            <person name="Emerson J.B."/>
            <person name="Shvartzbeyn A."/>
            <person name="Radune D."/>
            <person name="Vamathevan J."/>
            <person name="Riggs F."/>
            <person name="Grinberg V."/>
            <person name="Khouri H.M."/>
            <person name="Wackett L.P."/>
            <person name="Nelson K.E."/>
            <person name="Sadowsky M.J."/>
        </authorList>
    </citation>
    <scope>NUCLEOTIDE SEQUENCE [LARGE SCALE GENOMIC DNA]</scope>
    <source>
        <strain>TC1</strain>
    </source>
</reference>
<accession>A1R8U9</accession>
<dbReference type="EC" id="3.6.5.3" evidence="2"/>
<dbReference type="EMBL" id="CP000474">
    <property type="protein sequence ID" value="ABM07103.1"/>
    <property type="molecule type" value="Genomic_DNA"/>
</dbReference>
<dbReference type="RefSeq" id="WP_011775598.1">
    <property type="nucleotide sequence ID" value="NC_008711.1"/>
</dbReference>
<dbReference type="SMR" id="A1R8U9"/>
<dbReference type="STRING" id="290340.AAur_2952"/>
<dbReference type="GeneID" id="92753735"/>
<dbReference type="KEGG" id="aau:AAur_2952"/>
<dbReference type="eggNOG" id="COG0050">
    <property type="taxonomic scope" value="Bacteria"/>
</dbReference>
<dbReference type="HOGENOM" id="CLU_007265_0_1_11"/>
<dbReference type="OrthoDB" id="9803139at2"/>
<dbReference type="Proteomes" id="UP000000637">
    <property type="component" value="Chromosome"/>
</dbReference>
<dbReference type="GO" id="GO:0005829">
    <property type="term" value="C:cytosol"/>
    <property type="evidence" value="ECO:0007669"/>
    <property type="project" value="TreeGrafter"/>
</dbReference>
<dbReference type="GO" id="GO:0005525">
    <property type="term" value="F:GTP binding"/>
    <property type="evidence" value="ECO:0007669"/>
    <property type="project" value="UniProtKB-UniRule"/>
</dbReference>
<dbReference type="GO" id="GO:0003924">
    <property type="term" value="F:GTPase activity"/>
    <property type="evidence" value="ECO:0007669"/>
    <property type="project" value="InterPro"/>
</dbReference>
<dbReference type="GO" id="GO:0003746">
    <property type="term" value="F:translation elongation factor activity"/>
    <property type="evidence" value="ECO:0007669"/>
    <property type="project" value="UniProtKB-UniRule"/>
</dbReference>
<dbReference type="CDD" id="cd01884">
    <property type="entry name" value="EF_Tu"/>
    <property type="match status" value="1"/>
</dbReference>
<dbReference type="CDD" id="cd03697">
    <property type="entry name" value="EFTU_II"/>
    <property type="match status" value="1"/>
</dbReference>
<dbReference type="CDD" id="cd03707">
    <property type="entry name" value="EFTU_III"/>
    <property type="match status" value="1"/>
</dbReference>
<dbReference type="FunFam" id="2.40.30.10:FF:000001">
    <property type="entry name" value="Elongation factor Tu"/>
    <property type="match status" value="1"/>
</dbReference>
<dbReference type="FunFam" id="3.40.50.300:FF:000003">
    <property type="entry name" value="Elongation factor Tu"/>
    <property type="match status" value="1"/>
</dbReference>
<dbReference type="Gene3D" id="3.40.50.300">
    <property type="entry name" value="P-loop containing nucleotide triphosphate hydrolases"/>
    <property type="match status" value="1"/>
</dbReference>
<dbReference type="Gene3D" id="2.40.30.10">
    <property type="entry name" value="Translation factors"/>
    <property type="match status" value="2"/>
</dbReference>
<dbReference type="HAMAP" id="MF_00118_B">
    <property type="entry name" value="EF_Tu_B"/>
    <property type="match status" value="1"/>
</dbReference>
<dbReference type="InterPro" id="IPR041709">
    <property type="entry name" value="EF-Tu_GTP-bd"/>
</dbReference>
<dbReference type="InterPro" id="IPR050055">
    <property type="entry name" value="EF-Tu_GTPase"/>
</dbReference>
<dbReference type="InterPro" id="IPR004161">
    <property type="entry name" value="EFTu-like_2"/>
</dbReference>
<dbReference type="InterPro" id="IPR033720">
    <property type="entry name" value="EFTU_2"/>
</dbReference>
<dbReference type="InterPro" id="IPR031157">
    <property type="entry name" value="G_TR_CS"/>
</dbReference>
<dbReference type="InterPro" id="IPR027417">
    <property type="entry name" value="P-loop_NTPase"/>
</dbReference>
<dbReference type="InterPro" id="IPR005225">
    <property type="entry name" value="Small_GTP-bd"/>
</dbReference>
<dbReference type="InterPro" id="IPR000795">
    <property type="entry name" value="T_Tr_GTP-bd_dom"/>
</dbReference>
<dbReference type="InterPro" id="IPR009000">
    <property type="entry name" value="Transl_B-barrel_sf"/>
</dbReference>
<dbReference type="InterPro" id="IPR009001">
    <property type="entry name" value="Transl_elong_EF1A/Init_IF2_C"/>
</dbReference>
<dbReference type="InterPro" id="IPR004541">
    <property type="entry name" value="Transl_elong_EFTu/EF1A_bac/org"/>
</dbReference>
<dbReference type="InterPro" id="IPR004160">
    <property type="entry name" value="Transl_elong_EFTu/EF1A_C"/>
</dbReference>
<dbReference type="NCBIfam" id="TIGR00485">
    <property type="entry name" value="EF-Tu"/>
    <property type="match status" value="1"/>
</dbReference>
<dbReference type="NCBIfam" id="NF000766">
    <property type="entry name" value="PRK00049.1"/>
    <property type="match status" value="1"/>
</dbReference>
<dbReference type="NCBIfam" id="NF009372">
    <property type="entry name" value="PRK12735.1"/>
    <property type="match status" value="1"/>
</dbReference>
<dbReference type="NCBIfam" id="NF009373">
    <property type="entry name" value="PRK12736.1"/>
    <property type="match status" value="1"/>
</dbReference>
<dbReference type="NCBIfam" id="TIGR00231">
    <property type="entry name" value="small_GTP"/>
    <property type="match status" value="1"/>
</dbReference>
<dbReference type="PANTHER" id="PTHR43721:SF22">
    <property type="entry name" value="ELONGATION FACTOR TU, MITOCHONDRIAL"/>
    <property type="match status" value="1"/>
</dbReference>
<dbReference type="PANTHER" id="PTHR43721">
    <property type="entry name" value="ELONGATION FACTOR TU-RELATED"/>
    <property type="match status" value="1"/>
</dbReference>
<dbReference type="Pfam" id="PF00009">
    <property type="entry name" value="GTP_EFTU"/>
    <property type="match status" value="1"/>
</dbReference>
<dbReference type="Pfam" id="PF03144">
    <property type="entry name" value="GTP_EFTU_D2"/>
    <property type="match status" value="1"/>
</dbReference>
<dbReference type="Pfam" id="PF03143">
    <property type="entry name" value="GTP_EFTU_D3"/>
    <property type="match status" value="1"/>
</dbReference>
<dbReference type="PRINTS" id="PR00315">
    <property type="entry name" value="ELONGATNFCT"/>
</dbReference>
<dbReference type="SUPFAM" id="SSF50465">
    <property type="entry name" value="EF-Tu/eEF-1alpha/eIF2-gamma C-terminal domain"/>
    <property type="match status" value="1"/>
</dbReference>
<dbReference type="SUPFAM" id="SSF52540">
    <property type="entry name" value="P-loop containing nucleoside triphosphate hydrolases"/>
    <property type="match status" value="1"/>
</dbReference>
<dbReference type="SUPFAM" id="SSF50447">
    <property type="entry name" value="Translation proteins"/>
    <property type="match status" value="1"/>
</dbReference>
<dbReference type="PROSITE" id="PS00301">
    <property type="entry name" value="G_TR_1"/>
    <property type="match status" value="1"/>
</dbReference>
<dbReference type="PROSITE" id="PS51722">
    <property type="entry name" value="G_TR_2"/>
    <property type="match status" value="1"/>
</dbReference>
<keyword id="KW-0963">Cytoplasm</keyword>
<keyword id="KW-0251">Elongation factor</keyword>
<keyword id="KW-0342">GTP-binding</keyword>
<keyword id="KW-0378">Hydrolase</keyword>
<keyword id="KW-0460">Magnesium</keyword>
<keyword id="KW-0479">Metal-binding</keyword>
<keyword id="KW-0547">Nucleotide-binding</keyword>
<keyword id="KW-0648">Protein biosynthesis</keyword>
<organism>
    <name type="scientific">Paenarthrobacter aurescens (strain TC1)</name>
    <dbReference type="NCBI Taxonomy" id="290340"/>
    <lineage>
        <taxon>Bacteria</taxon>
        <taxon>Bacillati</taxon>
        <taxon>Actinomycetota</taxon>
        <taxon>Actinomycetes</taxon>
        <taxon>Micrococcales</taxon>
        <taxon>Micrococcaceae</taxon>
        <taxon>Paenarthrobacter</taxon>
    </lineage>
</organism>
<evidence type="ECO:0000250" key="1"/>
<evidence type="ECO:0000255" key="2">
    <source>
        <dbReference type="HAMAP-Rule" id="MF_00118"/>
    </source>
</evidence>
<name>EFTU_PAEAT</name>
<gene>
    <name evidence="2" type="primary">tuf</name>
    <name type="ordered locus">AAur_2952</name>
</gene>
<feature type="chain" id="PRO_1000015600" description="Elongation factor Tu">
    <location>
        <begin position="1"/>
        <end position="396"/>
    </location>
</feature>
<feature type="domain" description="tr-type G">
    <location>
        <begin position="10"/>
        <end position="206"/>
    </location>
</feature>
<feature type="region of interest" description="G1" evidence="1">
    <location>
        <begin position="19"/>
        <end position="26"/>
    </location>
</feature>
<feature type="region of interest" description="G2" evidence="1">
    <location>
        <begin position="62"/>
        <end position="66"/>
    </location>
</feature>
<feature type="region of interest" description="G3" evidence="1">
    <location>
        <begin position="83"/>
        <end position="86"/>
    </location>
</feature>
<feature type="region of interest" description="G4" evidence="1">
    <location>
        <begin position="138"/>
        <end position="141"/>
    </location>
</feature>
<feature type="region of interest" description="G5" evidence="1">
    <location>
        <begin position="176"/>
        <end position="178"/>
    </location>
</feature>
<feature type="binding site" evidence="2">
    <location>
        <begin position="19"/>
        <end position="26"/>
    </location>
    <ligand>
        <name>GTP</name>
        <dbReference type="ChEBI" id="CHEBI:37565"/>
    </ligand>
</feature>
<feature type="binding site" evidence="2">
    <location>
        <position position="26"/>
    </location>
    <ligand>
        <name>Mg(2+)</name>
        <dbReference type="ChEBI" id="CHEBI:18420"/>
    </ligand>
</feature>
<feature type="binding site" evidence="2">
    <location>
        <begin position="83"/>
        <end position="87"/>
    </location>
    <ligand>
        <name>GTP</name>
        <dbReference type="ChEBI" id="CHEBI:37565"/>
    </ligand>
</feature>
<feature type="binding site" evidence="2">
    <location>
        <begin position="138"/>
        <end position="141"/>
    </location>
    <ligand>
        <name>GTP</name>
        <dbReference type="ChEBI" id="CHEBI:37565"/>
    </ligand>
</feature>
<sequence length="396" mass="43563">MAKAKFERTKPHVNIGTIGHVDHGKTTLTAAISKVLYDQYPDLNEQRDFASIDSAPEERQRGITINISHVEYQTEKRHYAHVDAPGHADYIKNMITGAAQMDGAILVVAATDGPMAQTREHVLLARQVGVPYLLVALNKSDMVDDEELLDLVEMEVRELLSSQGFDGDEAPVVRVSGLKALEGDPVWVKSVQDLMAAVDESVPDPVRDRDKPFLMPIEDVFTITGRGTVVTGRAERGTLAINSEVEIVGIRPIQKTTVTGIEMFHKQLDEAWAGENCGLLLRGLKRDDVERGQVVVKPGSITPHTDFEANVYILSKDEGGRHNPFYSNYRPQFYFRTTDVTGVITLPEGTEMVMPGDNTEMTVALIQPIAMEEGLGFAIREGGRTVGSGRVTSIIK</sequence>
<comment type="function">
    <text evidence="2">GTP hydrolase that promotes the GTP-dependent binding of aminoacyl-tRNA to the A-site of ribosomes during protein biosynthesis.</text>
</comment>
<comment type="catalytic activity">
    <reaction evidence="2">
        <text>GTP + H2O = GDP + phosphate + H(+)</text>
        <dbReference type="Rhea" id="RHEA:19669"/>
        <dbReference type="ChEBI" id="CHEBI:15377"/>
        <dbReference type="ChEBI" id="CHEBI:15378"/>
        <dbReference type="ChEBI" id="CHEBI:37565"/>
        <dbReference type="ChEBI" id="CHEBI:43474"/>
        <dbReference type="ChEBI" id="CHEBI:58189"/>
        <dbReference type="EC" id="3.6.5.3"/>
    </reaction>
    <physiologicalReaction direction="left-to-right" evidence="2">
        <dbReference type="Rhea" id="RHEA:19670"/>
    </physiologicalReaction>
</comment>
<comment type="subunit">
    <text evidence="2">Monomer.</text>
</comment>
<comment type="subcellular location">
    <subcellularLocation>
        <location evidence="2">Cytoplasm</location>
    </subcellularLocation>
</comment>
<comment type="similarity">
    <text evidence="2">Belongs to the TRAFAC class translation factor GTPase superfamily. Classic translation factor GTPase family. EF-Tu/EF-1A subfamily.</text>
</comment>